<reference key="1">
    <citation type="journal article" date="2008" name="PLoS Genet.">
        <title>Genomic islands in the pathogenic filamentous fungus Aspergillus fumigatus.</title>
        <authorList>
            <person name="Fedorova N.D."/>
            <person name="Khaldi N."/>
            <person name="Joardar V.S."/>
            <person name="Maiti R."/>
            <person name="Amedeo P."/>
            <person name="Anderson M.J."/>
            <person name="Crabtree J."/>
            <person name="Silva J.C."/>
            <person name="Badger J.H."/>
            <person name="Albarraq A."/>
            <person name="Angiuoli S."/>
            <person name="Bussey H."/>
            <person name="Bowyer P."/>
            <person name="Cotty P.J."/>
            <person name="Dyer P.S."/>
            <person name="Egan A."/>
            <person name="Galens K."/>
            <person name="Fraser-Liggett C.M."/>
            <person name="Haas B.J."/>
            <person name="Inman J.M."/>
            <person name="Kent R."/>
            <person name="Lemieux S."/>
            <person name="Malavazi I."/>
            <person name="Orvis J."/>
            <person name="Roemer T."/>
            <person name="Ronning C.M."/>
            <person name="Sundaram J.P."/>
            <person name="Sutton G."/>
            <person name="Turner G."/>
            <person name="Venter J.C."/>
            <person name="White O.R."/>
            <person name="Whitty B.R."/>
            <person name="Youngman P."/>
            <person name="Wolfe K.H."/>
            <person name="Goldman G.H."/>
            <person name="Wortman J.R."/>
            <person name="Jiang B."/>
            <person name="Denning D.W."/>
            <person name="Nierman W.C."/>
        </authorList>
    </citation>
    <scope>NUCLEOTIDE SEQUENCE [LARGE SCALE GENOMIC DNA]</scope>
    <source>
        <strain>ATCC 1020 / DSM 3700 / CBS 544.65 / FGSC A1164 / JCM 1740 / NRRL 181 / WB 181</strain>
    </source>
</reference>
<gene>
    <name evidence="2" type="primary">pan2</name>
    <name type="ORF">NFIA_081370</name>
</gene>
<sequence>MEADWDELSRIPVPPPSPHGLPTAATTIAFDDVSELLWAGNEFGRITSFYGPELQRYTSVRAHPVSDGPVRQILFHERGVISLSPKSVHMITRRGLTQWHISHEEMTDLYCMSLTAQLNKIIVAGCQRAMFTIDIDKGIIVDKLHTDHNYTLMKKSRYLCAATDTGSVNALSLTDFRVVKSWKSHGTAINDMDARNDLLVTCGFSVRHLGSPIVDPLANVYDLKTLSPLPPIPFHAGAAYVRMHPKLSTTSFVASQTGQLQVVDLMNPNAINLRQANVSFMLGIDISPSGEALAINDAECSIHLWGSPSKIHFNEMSKEVEFADVVPRPPPLDWSPDTPLNMIGMPYYRERLLSAWPSHLVFEVGSPPAPIDQSLIPYLRPAEMGHYAPNPKKTRRYQVENTRALTTAEPALIAPKFLSEKAREQNKFKSEASVSDTAEALAGAKLNGEAEDDPLLKYSNVEIKYSRFGVDDFDFRFYNQTTFSGLETHIANSFTNALLQLLKFIPLVRNLALHHAASTCIYETCLLCEMGYLFDMLEKANGQNCQATNLLRTFSSYREASNLGLFEENLTTKSLSSAIQSVNRFFLNQIAHDFRMIVPSSDDLDQRLSTIASESIRCMFCQNEIVRPGNSLANELIYPAIDIKQARRNPAFRFSNILRASIERETQNRGWCNYCRRYQQVTIRKSIHRMPLVLILNAALSNPICRRLWSIPGWLPEEVGIAVDNGQVMCFEGDELKTQLQNKLPNLVVYELVGLVSEIDIPEHQKPHLVSFINVSISSRELEAKNRWHLFNDFLVTEVDKDEALRFNQPWKSPCILAYQAKDARHAVDDSWKNVLDITLLFRDWSLNGGRAVETRQTLTEEEKPTPGTPVALDTEFVDLEKAEIDVKADGSQEIVRPSKSGLARVSVLRGSGVHEGVPFIDDYITIKEPIVDYVTQYSGIKPGDLDPRTSQHNLVPLKVAYKKLWLLLNLGCVFVGHGLASDFRKINIQVPKSQTVDTQYLYFHPGKNRRLSLRYLAWAVFKEYIQEEPADNNQGHDSIEDARMALRLWKKFQEYEDAGIVNQILEEIFREGSKLGFRPPPRNGVATVLSRPGTAVTMQNSSGRNTPSTPDVGGAATATATTSAPATPRQAFRRSIALTPSNGTFGGPGAGDFFGGSPLK</sequence>
<evidence type="ECO:0000250" key="1"/>
<evidence type="ECO:0000255" key="2">
    <source>
        <dbReference type="HAMAP-Rule" id="MF_03182"/>
    </source>
</evidence>
<evidence type="ECO:0000256" key="3">
    <source>
        <dbReference type="SAM" id="MobiDB-lite"/>
    </source>
</evidence>
<name>PAN2_NEOFI</name>
<proteinExistence type="inferred from homology"/>
<feature type="chain" id="PRO_0000295350" description="PAN2-PAN3 deadenylation complex catalytic subunit pan2">
    <location>
        <begin position="1"/>
        <end position="1161"/>
    </location>
</feature>
<feature type="repeat" description="WD 1" evidence="2">
    <location>
        <begin position="20"/>
        <end position="59"/>
    </location>
</feature>
<feature type="repeat" description="WD 2" evidence="2">
    <location>
        <begin position="276"/>
        <end position="315"/>
    </location>
</feature>
<feature type="domain" description="USP" evidence="2">
    <location>
        <begin position="453"/>
        <end position="822"/>
    </location>
</feature>
<feature type="domain" description="Exonuclease" evidence="2">
    <location>
        <begin position="871"/>
        <end position="1049"/>
    </location>
</feature>
<feature type="repeat" description="WD 4" evidence="2">
    <location>
        <begin position="1009"/>
        <end position="1060"/>
    </location>
</feature>
<feature type="region of interest" description="Linker" evidence="2">
    <location>
        <begin position="316"/>
        <end position="452"/>
    </location>
</feature>
<feature type="region of interest" description="Disordered" evidence="3">
    <location>
        <begin position="1092"/>
        <end position="1161"/>
    </location>
</feature>
<feature type="compositionally biased region" description="Polar residues" evidence="3">
    <location>
        <begin position="1097"/>
        <end position="1110"/>
    </location>
</feature>
<feature type="compositionally biased region" description="Low complexity" evidence="3">
    <location>
        <begin position="1116"/>
        <end position="1129"/>
    </location>
</feature>
<feature type="compositionally biased region" description="Gly residues" evidence="3">
    <location>
        <begin position="1145"/>
        <end position="1155"/>
    </location>
</feature>
<feature type="binding site" evidence="2">
    <location>
        <position position="874"/>
    </location>
    <ligand>
        <name>a divalent metal cation</name>
        <dbReference type="ChEBI" id="CHEBI:60240"/>
        <note>catalytic</note>
    </ligand>
</feature>
<feature type="binding site" evidence="2">
    <location>
        <position position="876"/>
    </location>
    <ligand>
        <name>a divalent metal cation</name>
        <dbReference type="ChEBI" id="CHEBI:60240"/>
        <note>catalytic</note>
    </ligand>
</feature>
<feature type="binding site" evidence="2">
    <location>
        <position position="983"/>
    </location>
    <ligand>
        <name>a divalent metal cation</name>
        <dbReference type="ChEBI" id="CHEBI:60240"/>
        <note>catalytic</note>
    </ligand>
</feature>
<feature type="binding site" evidence="2">
    <location>
        <position position="1042"/>
    </location>
    <ligand>
        <name>a divalent metal cation</name>
        <dbReference type="ChEBI" id="CHEBI:60240"/>
        <note>catalytic</note>
    </ligand>
</feature>
<protein>
    <recommendedName>
        <fullName evidence="2">PAN2-PAN3 deadenylation complex catalytic subunit pan2</fullName>
        <ecNumber evidence="2">3.1.13.4</ecNumber>
    </recommendedName>
    <alternativeName>
        <fullName evidence="2">PAB1P-dependent poly(A)-specific ribonuclease</fullName>
    </alternativeName>
    <alternativeName>
        <fullName evidence="2">Poly(A)-nuclease deadenylation complex subunit 2</fullName>
        <shortName evidence="2">PAN deadenylation complex subunit 2</shortName>
    </alternativeName>
</protein>
<accession>A1DFN6</accession>
<dbReference type="EC" id="3.1.13.4" evidence="2"/>
<dbReference type="EMBL" id="DS027696">
    <property type="protein sequence ID" value="EAW18193.1"/>
    <property type="molecule type" value="Genomic_DNA"/>
</dbReference>
<dbReference type="RefSeq" id="XP_001260090.1">
    <property type="nucleotide sequence ID" value="XM_001260089.1"/>
</dbReference>
<dbReference type="SMR" id="A1DFN6"/>
<dbReference type="STRING" id="331117.A1DFN6"/>
<dbReference type="EnsemblFungi" id="EAW18193">
    <property type="protein sequence ID" value="EAW18193"/>
    <property type="gene ID" value="NFIA_081370"/>
</dbReference>
<dbReference type="GeneID" id="4586646"/>
<dbReference type="KEGG" id="nfi:NFIA_081370"/>
<dbReference type="VEuPathDB" id="FungiDB:NFIA_081370"/>
<dbReference type="eggNOG" id="KOG1275">
    <property type="taxonomic scope" value="Eukaryota"/>
</dbReference>
<dbReference type="HOGENOM" id="CLU_002369_1_0_1"/>
<dbReference type="OMA" id="TQELLWT"/>
<dbReference type="OrthoDB" id="16516at2759"/>
<dbReference type="Proteomes" id="UP000006702">
    <property type="component" value="Unassembled WGS sequence"/>
</dbReference>
<dbReference type="GO" id="GO:0000932">
    <property type="term" value="C:P-body"/>
    <property type="evidence" value="ECO:0007669"/>
    <property type="project" value="TreeGrafter"/>
</dbReference>
<dbReference type="GO" id="GO:0031251">
    <property type="term" value="C:PAN complex"/>
    <property type="evidence" value="ECO:0007669"/>
    <property type="project" value="UniProtKB-UniRule"/>
</dbReference>
<dbReference type="GO" id="GO:0046872">
    <property type="term" value="F:metal ion binding"/>
    <property type="evidence" value="ECO:0007669"/>
    <property type="project" value="UniProtKB-KW"/>
</dbReference>
<dbReference type="GO" id="GO:0003676">
    <property type="term" value="F:nucleic acid binding"/>
    <property type="evidence" value="ECO:0007669"/>
    <property type="project" value="InterPro"/>
</dbReference>
<dbReference type="GO" id="GO:0004535">
    <property type="term" value="F:poly(A)-specific ribonuclease activity"/>
    <property type="evidence" value="ECO:0007669"/>
    <property type="project" value="UniProtKB-UniRule"/>
</dbReference>
<dbReference type="GO" id="GO:0006397">
    <property type="term" value="P:mRNA processing"/>
    <property type="evidence" value="ECO:0007669"/>
    <property type="project" value="UniProtKB-KW"/>
</dbReference>
<dbReference type="GO" id="GO:0000289">
    <property type="term" value="P:nuclear-transcribed mRNA poly(A) tail shortening"/>
    <property type="evidence" value="ECO:0007669"/>
    <property type="project" value="UniProtKB-UniRule"/>
</dbReference>
<dbReference type="CDD" id="cd06143">
    <property type="entry name" value="PAN2_exo"/>
    <property type="match status" value="1"/>
</dbReference>
<dbReference type="FunFam" id="2.130.10.10:FF:000459">
    <property type="entry name" value="PAN2-PAN3 deadenylation complex catalytic subunit PAN2"/>
    <property type="match status" value="1"/>
</dbReference>
<dbReference type="FunFam" id="3.30.420.10:FF:000028">
    <property type="entry name" value="PAN2-PAN3 deadenylation complex catalytic subunit PAN2"/>
    <property type="match status" value="1"/>
</dbReference>
<dbReference type="FunFam" id="3.90.70.10:FF:000135">
    <property type="entry name" value="PAN2-PAN3 deadenylation complex catalytic subunit pan2"/>
    <property type="match status" value="1"/>
</dbReference>
<dbReference type="Gene3D" id="3.90.70.10">
    <property type="entry name" value="Cysteine proteinases"/>
    <property type="match status" value="1"/>
</dbReference>
<dbReference type="Gene3D" id="3.30.420.10">
    <property type="entry name" value="Ribonuclease H-like superfamily/Ribonuclease H"/>
    <property type="match status" value="1"/>
</dbReference>
<dbReference type="Gene3D" id="2.130.10.10">
    <property type="entry name" value="YVTN repeat-like/Quinoprotein amine dehydrogenase"/>
    <property type="match status" value="1"/>
</dbReference>
<dbReference type="HAMAP" id="MF_03182">
    <property type="entry name" value="PAN2"/>
    <property type="match status" value="1"/>
</dbReference>
<dbReference type="InterPro" id="IPR013520">
    <property type="entry name" value="Exonuclease_RNaseT/DNA_pol3"/>
</dbReference>
<dbReference type="InterPro" id="IPR030843">
    <property type="entry name" value="PAN2"/>
</dbReference>
<dbReference type="InterPro" id="IPR050785">
    <property type="entry name" value="PAN2-PAN3_catalytic_subunit"/>
</dbReference>
<dbReference type="InterPro" id="IPR048841">
    <property type="entry name" value="PAN2_N"/>
</dbReference>
<dbReference type="InterPro" id="IPR028881">
    <property type="entry name" value="PAN2_UCH_dom"/>
</dbReference>
<dbReference type="InterPro" id="IPR038765">
    <property type="entry name" value="Papain-like_cys_pep_sf"/>
</dbReference>
<dbReference type="InterPro" id="IPR012337">
    <property type="entry name" value="RNaseH-like_sf"/>
</dbReference>
<dbReference type="InterPro" id="IPR036397">
    <property type="entry name" value="RNaseH_sf"/>
</dbReference>
<dbReference type="InterPro" id="IPR028889">
    <property type="entry name" value="USP_dom"/>
</dbReference>
<dbReference type="InterPro" id="IPR015943">
    <property type="entry name" value="WD40/YVTN_repeat-like_dom_sf"/>
</dbReference>
<dbReference type="InterPro" id="IPR036322">
    <property type="entry name" value="WD40_repeat_dom_sf"/>
</dbReference>
<dbReference type="PANTHER" id="PTHR15728">
    <property type="entry name" value="DEADENYLATION COMPLEX CATALYTIC SUBUNIT PAN2"/>
    <property type="match status" value="1"/>
</dbReference>
<dbReference type="PANTHER" id="PTHR15728:SF0">
    <property type="entry name" value="PAN2-PAN3 DEADENYLATION COMPLEX CATALYTIC SUBUNIT PAN2"/>
    <property type="match status" value="1"/>
</dbReference>
<dbReference type="Pfam" id="PF20770">
    <property type="entry name" value="PAN2_N"/>
    <property type="match status" value="1"/>
</dbReference>
<dbReference type="Pfam" id="PF00929">
    <property type="entry name" value="RNase_T"/>
    <property type="match status" value="1"/>
</dbReference>
<dbReference type="Pfam" id="PF13423">
    <property type="entry name" value="UCH_1"/>
    <property type="match status" value="1"/>
</dbReference>
<dbReference type="SMART" id="SM00479">
    <property type="entry name" value="EXOIII"/>
    <property type="match status" value="1"/>
</dbReference>
<dbReference type="SUPFAM" id="SSF54001">
    <property type="entry name" value="Cysteine proteinases"/>
    <property type="match status" value="1"/>
</dbReference>
<dbReference type="SUPFAM" id="SSF53098">
    <property type="entry name" value="Ribonuclease H-like"/>
    <property type="match status" value="1"/>
</dbReference>
<dbReference type="SUPFAM" id="SSF50978">
    <property type="entry name" value="WD40 repeat-like"/>
    <property type="match status" value="1"/>
</dbReference>
<dbReference type="PROSITE" id="PS50235">
    <property type="entry name" value="USP_3"/>
    <property type="match status" value="1"/>
</dbReference>
<organism>
    <name type="scientific">Neosartorya fischeri (strain ATCC 1020 / DSM 3700 / CBS 544.65 / FGSC A1164 / JCM 1740 / NRRL 181 / WB 181)</name>
    <name type="common">Aspergillus fischerianus</name>
    <dbReference type="NCBI Taxonomy" id="331117"/>
    <lineage>
        <taxon>Eukaryota</taxon>
        <taxon>Fungi</taxon>
        <taxon>Dikarya</taxon>
        <taxon>Ascomycota</taxon>
        <taxon>Pezizomycotina</taxon>
        <taxon>Eurotiomycetes</taxon>
        <taxon>Eurotiomycetidae</taxon>
        <taxon>Eurotiales</taxon>
        <taxon>Aspergillaceae</taxon>
        <taxon>Aspergillus</taxon>
        <taxon>Aspergillus subgen. Fumigati</taxon>
    </lineage>
</organism>
<comment type="function">
    <text evidence="2">Catalytic subunit of the poly(A)-nuclease (PAN) deadenylation complex, one of two cytoplasmic mRNA deadenylases involved in mRNA turnover. PAN specifically shortens poly(A) tails of RNA and the activity is stimulated by poly(A)-binding protein pab1. PAN deadenylation is followed by rapid degradation of the shortened mRNA tails by the CCR4-NOT complex. Deadenylated mRNAs are then degraded by two alternative mechanisms, namely exosome-mediated 3'-5' exonucleolytic degradation, or deadenylation-dependent mRNA decaping and subsequent 5'-3' exonucleolytic degradation by xrn1. May also be involved in post-transcriptional maturation of mRNA poly(A) tails.</text>
</comment>
<comment type="catalytic activity">
    <reaction evidence="2">
        <text>Exonucleolytic cleavage of poly(A) to 5'-AMP.</text>
        <dbReference type="EC" id="3.1.13.4"/>
    </reaction>
</comment>
<comment type="cofactor">
    <cofactor evidence="2">
        <name>a divalent metal cation</name>
        <dbReference type="ChEBI" id="CHEBI:60240"/>
    </cofactor>
    <text evidence="2">Binds 2 metal cations per subunit in the catalytic exonuclease domain.</text>
</comment>
<comment type="activity regulation">
    <text evidence="1 2">Positively regulated by the regulatory subunit pan3.</text>
</comment>
<comment type="subunit">
    <text evidence="2">Forms a heterotrimer with an asymmetric homodimer of the regulatory subunit pan3 to form the poly(A)-nuclease (PAN) deadenylation complex.</text>
</comment>
<comment type="subcellular location">
    <subcellularLocation>
        <location evidence="2">Cytoplasm</location>
    </subcellularLocation>
</comment>
<comment type="domain">
    <text evidence="2">Contains a pseudo-UCH domain. This ubiquitin C-terminal hydrolase (UCH)-like or ubiquitin specific protease (USP)-like domain is predicted to be catalytically inactive because it lacks the active site catalytic triad characteristic of thiol proteases, with residues at the equivalent structural positions that are incompatible with catalysis, and it cannot bind ubiquitin. It functions as a structural scaffold for intra- and intermolecular interactions in the complex.</text>
</comment>
<comment type="domain">
    <text evidence="2">The linker, or PAN3 interaction domain (PID), between the WD40 repeats and the pseudo-UCH domain mediates interaction with pan3.</text>
</comment>
<comment type="similarity">
    <text evidence="2">Belongs to the peptidase C19 family. PAN2 subfamily.</text>
</comment>
<keyword id="KW-0963">Cytoplasm</keyword>
<keyword id="KW-0269">Exonuclease</keyword>
<keyword id="KW-0378">Hydrolase</keyword>
<keyword id="KW-0479">Metal-binding</keyword>
<keyword id="KW-0507">mRNA processing</keyword>
<keyword id="KW-0540">Nuclease</keyword>
<keyword id="KW-1185">Reference proteome</keyword>
<keyword id="KW-0677">Repeat</keyword>
<keyword id="KW-0853">WD repeat</keyword>